<dbReference type="EC" id="2.1.1.61" evidence="1"/>
<dbReference type="EC" id="1.5.-.-" evidence="1"/>
<dbReference type="EMBL" id="AM406670">
    <property type="protein sequence ID" value="CAL94099.1"/>
    <property type="molecule type" value="Genomic_DNA"/>
</dbReference>
<dbReference type="RefSeq" id="WP_011765215.1">
    <property type="nucleotide sequence ID" value="NC_008702.1"/>
</dbReference>
<dbReference type="SMR" id="A1K5J4"/>
<dbReference type="STRING" id="62928.azo1482"/>
<dbReference type="KEGG" id="azo:azo1482"/>
<dbReference type="eggNOG" id="COG0665">
    <property type="taxonomic scope" value="Bacteria"/>
</dbReference>
<dbReference type="eggNOG" id="COG4121">
    <property type="taxonomic scope" value="Bacteria"/>
</dbReference>
<dbReference type="HOGENOM" id="CLU_022427_1_0_4"/>
<dbReference type="Proteomes" id="UP000002588">
    <property type="component" value="Chromosome"/>
</dbReference>
<dbReference type="GO" id="GO:0005737">
    <property type="term" value="C:cytoplasm"/>
    <property type="evidence" value="ECO:0007669"/>
    <property type="project" value="UniProtKB-SubCell"/>
</dbReference>
<dbReference type="GO" id="GO:0050660">
    <property type="term" value="F:flavin adenine dinucleotide binding"/>
    <property type="evidence" value="ECO:0007669"/>
    <property type="project" value="UniProtKB-UniRule"/>
</dbReference>
<dbReference type="GO" id="GO:0016645">
    <property type="term" value="F:oxidoreductase activity, acting on the CH-NH group of donors"/>
    <property type="evidence" value="ECO:0007669"/>
    <property type="project" value="InterPro"/>
</dbReference>
<dbReference type="GO" id="GO:0004808">
    <property type="term" value="F:tRNA (5-methylaminomethyl-2-thiouridylate)(34)-methyltransferase activity"/>
    <property type="evidence" value="ECO:0007669"/>
    <property type="project" value="UniProtKB-EC"/>
</dbReference>
<dbReference type="GO" id="GO:0032259">
    <property type="term" value="P:methylation"/>
    <property type="evidence" value="ECO:0007669"/>
    <property type="project" value="UniProtKB-KW"/>
</dbReference>
<dbReference type="GO" id="GO:0002098">
    <property type="term" value="P:tRNA wobble uridine modification"/>
    <property type="evidence" value="ECO:0007669"/>
    <property type="project" value="TreeGrafter"/>
</dbReference>
<dbReference type="Gene3D" id="3.30.9.10">
    <property type="entry name" value="D-Amino Acid Oxidase, subunit A, domain 2"/>
    <property type="match status" value="1"/>
</dbReference>
<dbReference type="Gene3D" id="3.50.50.60">
    <property type="entry name" value="FAD/NAD(P)-binding domain"/>
    <property type="match status" value="1"/>
</dbReference>
<dbReference type="Gene3D" id="3.40.50.150">
    <property type="entry name" value="Vaccinia Virus protein VP39"/>
    <property type="match status" value="1"/>
</dbReference>
<dbReference type="HAMAP" id="MF_01102">
    <property type="entry name" value="MnmC"/>
    <property type="match status" value="1"/>
</dbReference>
<dbReference type="InterPro" id="IPR006076">
    <property type="entry name" value="FAD-dep_OxRdtase"/>
</dbReference>
<dbReference type="InterPro" id="IPR036188">
    <property type="entry name" value="FAD/NAD-bd_sf"/>
</dbReference>
<dbReference type="InterPro" id="IPR008471">
    <property type="entry name" value="MnmC-like_methylTransf"/>
</dbReference>
<dbReference type="InterPro" id="IPR029063">
    <property type="entry name" value="SAM-dependent_MTases_sf"/>
</dbReference>
<dbReference type="InterPro" id="IPR023032">
    <property type="entry name" value="tRNA_MAMT_biosynth_bifunc_MnmC"/>
</dbReference>
<dbReference type="InterPro" id="IPR047785">
    <property type="entry name" value="tRNA_MNMC2"/>
</dbReference>
<dbReference type="InterPro" id="IPR017610">
    <property type="entry name" value="tRNA_S-uridine_synth_MnmC_C"/>
</dbReference>
<dbReference type="NCBIfam" id="TIGR03197">
    <property type="entry name" value="MnmC_Cterm"/>
    <property type="match status" value="1"/>
</dbReference>
<dbReference type="NCBIfam" id="NF002481">
    <property type="entry name" value="PRK01747.1-2"/>
    <property type="match status" value="1"/>
</dbReference>
<dbReference type="NCBIfam" id="NF002483">
    <property type="entry name" value="PRK01747.1-4"/>
    <property type="match status" value="1"/>
</dbReference>
<dbReference type="NCBIfam" id="NF033855">
    <property type="entry name" value="tRNA_MNMC2"/>
    <property type="match status" value="1"/>
</dbReference>
<dbReference type="PANTHER" id="PTHR13847">
    <property type="entry name" value="SARCOSINE DEHYDROGENASE-RELATED"/>
    <property type="match status" value="1"/>
</dbReference>
<dbReference type="PANTHER" id="PTHR13847:SF283">
    <property type="entry name" value="TRNA 5-METHYLAMINOMETHYL-2-THIOURIDINE BIOSYNTHESIS BIFUNCTIONAL PROTEIN MNMC"/>
    <property type="match status" value="1"/>
</dbReference>
<dbReference type="Pfam" id="PF01266">
    <property type="entry name" value="DAO"/>
    <property type="match status" value="1"/>
</dbReference>
<dbReference type="Pfam" id="PF05430">
    <property type="entry name" value="Methyltransf_30"/>
    <property type="match status" value="1"/>
</dbReference>
<dbReference type="SUPFAM" id="SSF54373">
    <property type="entry name" value="FAD-linked reductases, C-terminal domain"/>
    <property type="match status" value="1"/>
</dbReference>
<dbReference type="SUPFAM" id="SSF51905">
    <property type="entry name" value="FAD/NAD(P)-binding domain"/>
    <property type="match status" value="1"/>
</dbReference>
<keyword id="KW-0963">Cytoplasm</keyword>
<keyword id="KW-0274">FAD</keyword>
<keyword id="KW-0285">Flavoprotein</keyword>
<keyword id="KW-0489">Methyltransferase</keyword>
<keyword id="KW-0511">Multifunctional enzyme</keyword>
<keyword id="KW-0560">Oxidoreductase</keyword>
<keyword id="KW-1185">Reference proteome</keyword>
<keyword id="KW-0949">S-adenosyl-L-methionine</keyword>
<keyword id="KW-0808">Transferase</keyword>
<keyword id="KW-0819">tRNA processing</keyword>
<accession>A1K5J4</accession>
<feature type="chain" id="PRO_0000347941" description="tRNA 5-methylaminomethyl-2-thiouridine biosynthesis bifunctional protein MnmC">
    <location>
        <begin position="1"/>
        <end position="635"/>
    </location>
</feature>
<feature type="region of interest" description="tRNA (mnm(5)s(2)U34)-methyltransferase">
    <location>
        <begin position="1"/>
        <end position="231"/>
    </location>
</feature>
<feature type="region of interest" description="FAD-dependent cmnm(5)s(2)U34 oxidoreductase">
    <location>
        <begin position="249"/>
        <end position="635"/>
    </location>
</feature>
<protein>
    <recommendedName>
        <fullName evidence="1">tRNA 5-methylaminomethyl-2-thiouridine biosynthesis bifunctional protein MnmC</fullName>
        <shortName evidence="1">tRNA mnm(5)s(2)U biosynthesis bifunctional protein</shortName>
    </recommendedName>
    <domain>
        <recommendedName>
            <fullName evidence="1">tRNA (mnm(5)s(2)U34)-methyltransferase</fullName>
            <ecNumber evidence="1">2.1.1.61</ecNumber>
        </recommendedName>
    </domain>
    <domain>
        <recommendedName>
            <fullName evidence="1">FAD-dependent cmnm(5)s(2)U34 oxidoreductase</fullName>
            <ecNumber evidence="1">1.5.-.-</ecNumber>
        </recommendedName>
    </domain>
</protein>
<reference key="1">
    <citation type="journal article" date="2006" name="Nat. Biotechnol.">
        <title>Complete genome of the mutualistic, N2-fixing grass endophyte Azoarcus sp. strain BH72.</title>
        <authorList>
            <person name="Krause A."/>
            <person name="Ramakumar A."/>
            <person name="Bartels D."/>
            <person name="Battistoni F."/>
            <person name="Bekel T."/>
            <person name="Boch J."/>
            <person name="Boehm M."/>
            <person name="Friedrich F."/>
            <person name="Hurek T."/>
            <person name="Krause L."/>
            <person name="Linke B."/>
            <person name="McHardy A.C."/>
            <person name="Sarkar A."/>
            <person name="Schneiker S."/>
            <person name="Syed A.A."/>
            <person name="Thauer R."/>
            <person name="Vorhoelter F.-J."/>
            <person name="Weidner S."/>
            <person name="Puehler A."/>
            <person name="Reinhold-Hurek B."/>
            <person name="Kaiser O."/>
            <person name="Goesmann A."/>
        </authorList>
    </citation>
    <scope>NUCLEOTIDE SEQUENCE [LARGE SCALE GENOMIC DNA]</scope>
    <source>
        <strain>BH72</strain>
    </source>
</reference>
<name>MNMC_AZOSB</name>
<organism>
    <name type="scientific">Azoarcus sp. (strain BH72)</name>
    <dbReference type="NCBI Taxonomy" id="418699"/>
    <lineage>
        <taxon>Bacteria</taxon>
        <taxon>Pseudomonadati</taxon>
        <taxon>Pseudomonadota</taxon>
        <taxon>Betaproteobacteria</taxon>
        <taxon>Rhodocyclales</taxon>
        <taxon>Zoogloeaceae</taxon>
        <taxon>Azoarcus</taxon>
    </lineage>
</organism>
<sequence>MPITPASLSFAEDGTPYSTAYGDVYHSSDGGLGQAHHVFLAGNGLPERWRGRERFVIVETGFGLGLNFLASWAAWRKDPQRSERLHFVSCELHPFRVEDLALLHARWPEFAPLAAELQANWPCLAPGVHRLHLDGGRVCLTLYFGDARDGLAQLDARADAFLLDGFSPAKNPDLWSARIFHLLARLAAADATLATWSVAGEVREGLRRAGFEVEKAPGFGGKRQMLRGRYLGRGHRPAPAAAERRALVIGAGVAGTSIAERLAARGWQVELLDAASGPAQGASGNHAGVLRPLPSLDDNRMGRLTRAGTLYGWRHIQRLQAAGLPLRAEACGVLHLARDAAQEAKMRAVVERLALPPAHLRFVSAAEASEIGGWPVPLGGWWFGDSGWVQPPSLCAANLSAGGEGIRAHWNARVTLARADTRWQARDAQGALLAEAPVAILAAGTGITGFPLAAPLPVVSARGQVSLLPAPAGSAPRVVMCRMGYVSPAVDGLRCAGATFDVGDDDATLRARDHHENLSKLEAMLPGYTAALATQPAEGRVGFRPASPDRLPMVGAVPALTTLAAPCALAEIPRHTGLYALSGFGARGLVWATLAAETLASQLDGEPLPLERDLVDALDPARFLLRPARTLRGED</sequence>
<comment type="function">
    <text evidence="1">Catalyzes the last two steps in the biosynthesis of 5-methylaminomethyl-2-thiouridine (mnm(5)s(2)U) at the wobble position (U34) in tRNA. Catalyzes the FAD-dependent demodification of cmnm(5)s(2)U34 to nm(5)s(2)U34, followed by the transfer of a methyl group from S-adenosyl-L-methionine to nm(5)s(2)U34, to form mnm(5)s(2)U34.</text>
</comment>
<comment type="catalytic activity">
    <reaction evidence="1">
        <text>5-aminomethyl-2-thiouridine(34) in tRNA + S-adenosyl-L-methionine = 5-methylaminomethyl-2-thiouridine(34) in tRNA + S-adenosyl-L-homocysteine + H(+)</text>
        <dbReference type="Rhea" id="RHEA:19569"/>
        <dbReference type="Rhea" id="RHEA-COMP:10195"/>
        <dbReference type="Rhea" id="RHEA-COMP:10197"/>
        <dbReference type="ChEBI" id="CHEBI:15378"/>
        <dbReference type="ChEBI" id="CHEBI:57856"/>
        <dbReference type="ChEBI" id="CHEBI:59789"/>
        <dbReference type="ChEBI" id="CHEBI:74454"/>
        <dbReference type="ChEBI" id="CHEBI:74455"/>
        <dbReference type="EC" id="2.1.1.61"/>
    </reaction>
</comment>
<comment type="cofactor">
    <cofactor evidence="1">
        <name>FAD</name>
        <dbReference type="ChEBI" id="CHEBI:57692"/>
    </cofactor>
</comment>
<comment type="subcellular location">
    <subcellularLocation>
        <location evidence="1">Cytoplasm</location>
    </subcellularLocation>
</comment>
<comment type="similarity">
    <text evidence="1">In the N-terminal section; belongs to the methyltransferase superfamily. tRNA (mnm(5)s(2)U34)-methyltransferase family.</text>
</comment>
<comment type="similarity">
    <text evidence="1">In the C-terminal section; belongs to the DAO family.</text>
</comment>
<evidence type="ECO:0000255" key="1">
    <source>
        <dbReference type="HAMAP-Rule" id="MF_01102"/>
    </source>
</evidence>
<proteinExistence type="inferred from homology"/>
<gene>
    <name evidence="1" type="primary">mnmC</name>
    <name type="ordered locus">azo1482</name>
</gene>